<evidence type="ECO:0000250" key="1"/>
<evidence type="ECO:0000255" key="2"/>
<evidence type="ECO:0000255" key="3">
    <source>
        <dbReference type="PROSITE-ProRule" id="PRU00059"/>
    </source>
</evidence>
<evidence type="ECO:0000255" key="4">
    <source>
        <dbReference type="PROSITE-ProRule" id="PRU00124"/>
    </source>
</evidence>
<evidence type="ECO:0000255" key="5">
    <source>
        <dbReference type="PROSITE-ProRule" id="PRU00188"/>
    </source>
</evidence>
<evidence type="ECO:0000255" key="6">
    <source>
        <dbReference type="PROSITE-ProRule" id="PRU00274"/>
    </source>
</evidence>
<evidence type="ECO:0000256" key="7">
    <source>
        <dbReference type="SAM" id="MobiDB-lite"/>
    </source>
</evidence>
<evidence type="ECO:0000269" key="8">
    <source>
    </source>
</evidence>
<evidence type="ECO:0000303" key="9">
    <source>
    </source>
</evidence>
<evidence type="ECO:0000303" key="10">
    <source>
    </source>
</evidence>
<evidence type="ECO:0000305" key="11"/>
<sequence>MDKENSDVSAAPADLKISNISVQVVSAQKKLPVRRPPLPGRRLPLPGRRPPQRPIGKAKPKKQSKKKVPFWNVQNKIILFTVFLFILAVIAWTLLWLYISKTESKDAFYFAGMFRITNIEFLPEYRQKESREFLSVSRTVQQVINLVYTTSAFSKFYEQSVVADVSSNNKGGLLVHFWIVFVMPRAKGHIFCEDCVAAILKDSIQTSIINRTSVGSLQGLAVDMDSVVLNAGLRSDYSSTIGSDKGCSQYFYAEHLSLHYPLEISAASGRLMCHFKLVAIVGYLIRLSIKSIQIEADNCVTDSLTIYDSLLPIRSSILYRICEPTRTLMSFVSTNNLMLVTFKSPHIRRLSGIRAYFEVIPEQKCENTVLVKDITGFEGKISSPYYPSYYPPKCKCTWKFQTSLSTLGIALKFYNYSITKKSMKGCEHGWWEINEHMYCGSYMDHQTIFRVPSPLVHIQLQCSSRLSDKPLLAEYGSYNISQPCPVGSFRCSSGLCVPQAQRCDGVNDCFDESDELFCVSPQPACNTSSFRQHGPLICDGFRDCENGRDEQNCTQSIPCNNRTFKCGNDICFRKQNAKCDGTVDCPDGSDEEGCTCSRSSSALHRIIGGTDTLEGGWPWQVSLHFVGSAYCGASVISREWLLSAAHCFHGNRLSDPTPWTAHLGMYVQGNAKFVSPVRRIVVHEYYNSQTFDYDIALLQLSIAWPETLKQLIQPICIPPTGQRVRSGEKCWVTGWGRRHEADNKGSLVLQQAEVELIDQTLCVSTYGIITSRMLCAGIMSGKRDACKGDSGGPLSCRRKSDGKWILTGIVSWGHGSGRPNFPGVYTRVSNFVPWIHKYVPSLL</sequence>
<name>TMPS7_HUMAN</name>
<accession>Q7RTY8</accession>
<accession>C9J8P7</accession>
<accession>E9PAS3</accession>
<accession>Q17RH4</accession>
<comment type="function">
    <text evidence="1">Serine protease which preferentially hydrolyzes peptides with Arg at the P1 position.</text>
</comment>
<comment type="subunit">
    <text>Forms a heterodimer with SERPINA5.</text>
</comment>
<comment type="subcellular location">
    <subcellularLocation>
        <location evidence="1">Cell membrane</location>
        <topology evidence="1">Single-pass type II membrane protein</topology>
    </subcellularLocation>
</comment>
<comment type="alternative products">
    <event type="alternative splicing"/>
    <isoform>
        <id>Q7RTY8-1</id>
        <name>1</name>
        <sequence type="displayed"/>
    </isoform>
    <isoform>
        <id>Q7RTY8-2</id>
        <name>2</name>
        <sequence type="described" ref="VSP_040772 VSP_040773 VSP_040774"/>
    </isoform>
    <isoform>
        <id>Q7RTY8-3</id>
        <name>3</name>
        <sequence type="described" ref="VSP_040771"/>
    </isoform>
</comment>
<comment type="tissue specificity">
    <text evidence="8">Expressed in brain, ovary, testis, salivary gland, trachea and lung.</text>
</comment>
<comment type="PTM">
    <text evidence="1">N-glycosylated.</text>
</comment>
<comment type="similarity">
    <text evidence="6">Belongs to the peptidase S1 family.</text>
</comment>
<keyword id="KW-0025">Alternative splicing</keyword>
<keyword id="KW-1003">Cell membrane</keyword>
<keyword id="KW-1015">Disulfide bond</keyword>
<keyword id="KW-0325">Glycoprotein</keyword>
<keyword id="KW-0378">Hydrolase</keyword>
<keyword id="KW-0472">Membrane</keyword>
<keyword id="KW-0645">Protease</keyword>
<keyword id="KW-1267">Proteomics identification</keyword>
<keyword id="KW-1185">Reference proteome</keyword>
<keyword id="KW-0677">Repeat</keyword>
<keyword id="KW-0720">Serine protease</keyword>
<keyword id="KW-0735">Signal-anchor</keyword>
<keyword id="KW-0812">Transmembrane</keyword>
<keyword id="KW-1133">Transmembrane helix</keyword>
<keyword id="KW-0865">Zymogen</keyword>
<organism>
    <name type="scientific">Homo sapiens</name>
    <name type="common">Human</name>
    <dbReference type="NCBI Taxonomy" id="9606"/>
    <lineage>
        <taxon>Eukaryota</taxon>
        <taxon>Metazoa</taxon>
        <taxon>Chordata</taxon>
        <taxon>Craniata</taxon>
        <taxon>Vertebrata</taxon>
        <taxon>Euteleostomi</taxon>
        <taxon>Mammalia</taxon>
        <taxon>Eutheria</taxon>
        <taxon>Euarchontoglires</taxon>
        <taxon>Primates</taxon>
        <taxon>Haplorrhini</taxon>
        <taxon>Catarrhini</taxon>
        <taxon>Hominidae</taxon>
        <taxon>Homo</taxon>
    </lineage>
</organism>
<dbReference type="EC" id="3.4.21.-"/>
<dbReference type="EMBL" id="AC015778">
    <property type="status" value="NOT_ANNOTATED_CDS"/>
    <property type="molecule type" value="Genomic_DNA"/>
</dbReference>
<dbReference type="EMBL" id="AC024887">
    <property type="status" value="NOT_ANNOTATED_CDS"/>
    <property type="molecule type" value="Genomic_DNA"/>
</dbReference>
<dbReference type="EMBL" id="AK131211">
    <property type="protein sequence ID" value="BAD18401.1"/>
    <property type="molecule type" value="mRNA"/>
</dbReference>
<dbReference type="EMBL" id="BC117322">
    <property type="protein sequence ID" value="AAI17323.1"/>
    <property type="molecule type" value="mRNA"/>
</dbReference>
<dbReference type="EMBL" id="BN000125">
    <property type="protein sequence ID" value="CAD67577.1"/>
    <property type="molecule type" value="mRNA"/>
</dbReference>
<dbReference type="CCDS" id="CCDS43129.2">
    <molecule id="Q7RTY8-2"/>
</dbReference>
<dbReference type="CCDS" id="CCDS93340.1">
    <molecule id="Q7RTY8-1"/>
</dbReference>
<dbReference type="RefSeq" id="NP_001036040.2">
    <molecule id="Q7RTY8-2"/>
    <property type="nucleotide sequence ID" value="NM_001042575.2"/>
</dbReference>
<dbReference type="RefSeq" id="NP_001382436.1">
    <molecule id="Q7RTY8-1"/>
    <property type="nucleotide sequence ID" value="NM_001395507.1"/>
</dbReference>
<dbReference type="SMR" id="Q7RTY8"/>
<dbReference type="BioGRID" id="131324">
    <property type="interactions" value="3"/>
</dbReference>
<dbReference type="FunCoup" id="Q7RTY8">
    <property type="interactions" value="237"/>
</dbReference>
<dbReference type="IntAct" id="Q7RTY8">
    <property type="interactions" value="1"/>
</dbReference>
<dbReference type="MEROPS" id="S01.072"/>
<dbReference type="iPTMnet" id="Q7RTY8"/>
<dbReference type="PhosphoSitePlus" id="Q7RTY8"/>
<dbReference type="BioMuta" id="TMPRSS7"/>
<dbReference type="DMDM" id="327478556"/>
<dbReference type="jPOST" id="Q7RTY8"/>
<dbReference type="MassIVE" id="Q7RTY8"/>
<dbReference type="PaxDb" id="9606-ENSP00000478830"/>
<dbReference type="PeptideAtlas" id="Q7RTY8"/>
<dbReference type="ProteomicsDB" id="68937">
    <molecule id="Q7RTY8-1"/>
</dbReference>
<dbReference type="ProteomicsDB" id="68938">
    <molecule id="Q7RTY8-2"/>
</dbReference>
<dbReference type="ProteomicsDB" id="68939">
    <molecule id="Q7RTY8-3"/>
</dbReference>
<dbReference type="Antibodypedia" id="52124">
    <property type="antibodies" value="110 antibodies from 17 providers"/>
</dbReference>
<dbReference type="DNASU" id="344805"/>
<dbReference type="Ensembl" id="ENST00000419127.5">
    <molecule id="Q7RTY8-2"/>
    <property type="protein sequence ID" value="ENSP00000411645.1"/>
    <property type="gene ID" value="ENSG00000176040.14"/>
</dbReference>
<dbReference type="Ensembl" id="ENST00000452346.7">
    <molecule id="Q7RTY8-1"/>
    <property type="protein sequence ID" value="ENSP00000398236.2"/>
    <property type="gene ID" value="ENSG00000176040.14"/>
</dbReference>
<dbReference type="Ensembl" id="ENST00000617607.4">
    <molecule id="Q7RTY8-2"/>
    <property type="protein sequence ID" value="ENSP00000478830.1"/>
    <property type="gene ID" value="ENSG00000176040.14"/>
</dbReference>
<dbReference type="GeneID" id="344805"/>
<dbReference type="KEGG" id="hsa:344805"/>
<dbReference type="MANE-Select" id="ENST00000452346.7">
    <property type="protein sequence ID" value="ENSP00000398236.2"/>
    <property type="RefSeq nucleotide sequence ID" value="NM_001395507.1"/>
    <property type="RefSeq protein sequence ID" value="NP_001382436.1"/>
</dbReference>
<dbReference type="UCSC" id="uc010hqb.3">
    <molecule id="Q7RTY8-1"/>
    <property type="organism name" value="human"/>
</dbReference>
<dbReference type="AGR" id="HGNC:30846"/>
<dbReference type="CTD" id="344805"/>
<dbReference type="DisGeNET" id="344805"/>
<dbReference type="GeneCards" id="TMPRSS7"/>
<dbReference type="HGNC" id="HGNC:30846">
    <property type="gene designation" value="TMPRSS7"/>
</dbReference>
<dbReference type="HPA" id="ENSG00000176040">
    <property type="expression patterns" value="Tissue enhanced (testis)"/>
</dbReference>
<dbReference type="neXtProt" id="NX_Q7RTY8"/>
<dbReference type="OpenTargets" id="ENSG00000176040"/>
<dbReference type="PharmGKB" id="PA134928796"/>
<dbReference type="VEuPathDB" id="HostDB:ENSG00000176040"/>
<dbReference type="eggNOG" id="KOG3627">
    <property type="taxonomic scope" value="Eukaryota"/>
</dbReference>
<dbReference type="GeneTree" id="ENSGT00940000160085"/>
<dbReference type="HOGENOM" id="CLU_006842_19_3_1"/>
<dbReference type="InParanoid" id="Q7RTY8"/>
<dbReference type="OMA" id="WVFIFRR"/>
<dbReference type="OrthoDB" id="414661at2759"/>
<dbReference type="PAN-GO" id="Q7RTY8">
    <property type="GO annotations" value="1 GO annotation based on evolutionary models"/>
</dbReference>
<dbReference type="PhylomeDB" id="Q7RTY8"/>
<dbReference type="TreeFam" id="TF330647"/>
<dbReference type="PathwayCommons" id="Q7RTY8"/>
<dbReference type="BioGRID-ORCS" id="344805">
    <property type="hits" value="13 hits in 1143 CRISPR screens"/>
</dbReference>
<dbReference type="GenomeRNAi" id="344805"/>
<dbReference type="Pharos" id="Q7RTY8">
    <property type="development level" value="Tdark"/>
</dbReference>
<dbReference type="PRO" id="PR:Q7RTY8"/>
<dbReference type="Proteomes" id="UP000005640">
    <property type="component" value="Chromosome 3"/>
</dbReference>
<dbReference type="RNAct" id="Q7RTY8">
    <property type="molecule type" value="protein"/>
</dbReference>
<dbReference type="Bgee" id="ENSG00000176040">
    <property type="expression patterns" value="Expressed in male germ line stem cell (sensu Vertebrata) in testis and 37 other cell types or tissues"/>
</dbReference>
<dbReference type="ExpressionAtlas" id="Q7RTY8">
    <property type="expression patterns" value="baseline and differential"/>
</dbReference>
<dbReference type="GO" id="GO:0005886">
    <property type="term" value="C:plasma membrane"/>
    <property type="evidence" value="ECO:0000250"/>
    <property type="project" value="UniProtKB"/>
</dbReference>
<dbReference type="GO" id="GO:0004252">
    <property type="term" value="F:serine-type endopeptidase activity"/>
    <property type="evidence" value="ECO:0007669"/>
    <property type="project" value="InterPro"/>
</dbReference>
<dbReference type="GO" id="GO:0008236">
    <property type="term" value="F:serine-type peptidase activity"/>
    <property type="evidence" value="ECO:0000250"/>
    <property type="project" value="UniProtKB"/>
</dbReference>
<dbReference type="GO" id="GO:0006508">
    <property type="term" value="P:proteolysis"/>
    <property type="evidence" value="ECO:0000250"/>
    <property type="project" value="UniProtKB"/>
</dbReference>
<dbReference type="CDD" id="cd00041">
    <property type="entry name" value="CUB"/>
    <property type="match status" value="1"/>
</dbReference>
<dbReference type="CDD" id="cd00112">
    <property type="entry name" value="LDLa"/>
    <property type="match status" value="2"/>
</dbReference>
<dbReference type="CDD" id="cd00190">
    <property type="entry name" value="Tryp_SPc"/>
    <property type="match status" value="1"/>
</dbReference>
<dbReference type="FunFam" id="2.60.120.290:FF:000033">
    <property type="entry name" value="Transmembrane protease serine 7"/>
    <property type="match status" value="1"/>
</dbReference>
<dbReference type="FunFam" id="4.10.400.10:FF:000065">
    <property type="entry name" value="Transmembrane protease serine 7"/>
    <property type="match status" value="1"/>
</dbReference>
<dbReference type="FunFam" id="3.30.70.960:FF:000005">
    <property type="entry name" value="transmembrane protease serine 7"/>
    <property type="match status" value="1"/>
</dbReference>
<dbReference type="FunFam" id="2.40.10.10:FF:000003">
    <property type="entry name" value="Transmembrane serine protease 3"/>
    <property type="match status" value="1"/>
</dbReference>
<dbReference type="FunFam" id="2.60.120.290:FF:000040">
    <property type="entry name" value="Transmembrane serine protease 7"/>
    <property type="match status" value="1"/>
</dbReference>
<dbReference type="FunFam" id="4.10.400.10:FF:000109">
    <property type="entry name" value="Transmembrane serine protease 7"/>
    <property type="match status" value="1"/>
</dbReference>
<dbReference type="Gene3D" id="4.10.400.10">
    <property type="entry name" value="Low-density Lipoprotein Receptor"/>
    <property type="match status" value="2"/>
</dbReference>
<dbReference type="Gene3D" id="3.30.70.960">
    <property type="entry name" value="SEA domain"/>
    <property type="match status" value="1"/>
</dbReference>
<dbReference type="Gene3D" id="2.60.120.290">
    <property type="entry name" value="Spermadhesin, CUB domain"/>
    <property type="match status" value="2"/>
</dbReference>
<dbReference type="Gene3D" id="2.40.10.10">
    <property type="entry name" value="Trypsin-like serine proteases"/>
    <property type="match status" value="2"/>
</dbReference>
<dbReference type="InterPro" id="IPR000859">
    <property type="entry name" value="CUB_dom"/>
</dbReference>
<dbReference type="InterPro" id="IPR036055">
    <property type="entry name" value="LDL_receptor-like_sf"/>
</dbReference>
<dbReference type="InterPro" id="IPR023415">
    <property type="entry name" value="LDLR_class-A_CS"/>
</dbReference>
<dbReference type="InterPro" id="IPR002172">
    <property type="entry name" value="LDrepeatLR_classA_rpt"/>
</dbReference>
<dbReference type="InterPro" id="IPR009003">
    <property type="entry name" value="Peptidase_S1_PA"/>
</dbReference>
<dbReference type="InterPro" id="IPR043504">
    <property type="entry name" value="Peptidase_S1_PA_chymotrypsin"/>
</dbReference>
<dbReference type="InterPro" id="IPR001314">
    <property type="entry name" value="Peptidase_S1A"/>
</dbReference>
<dbReference type="InterPro" id="IPR000082">
    <property type="entry name" value="SEA_dom"/>
</dbReference>
<dbReference type="InterPro" id="IPR036364">
    <property type="entry name" value="SEA_dom_sf"/>
</dbReference>
<dbReference type="InterPro" id="IPR035914">
    <property type="entry name" value="Sperma_CUB_dom_sf"/>
</dbReference>
<dbReference type="InterPro" id="IPR001254">
    <property type="entry name" value="Trypsin_dom"/>
</dbReference>
<dbReference type="InterPro" id="IPR018114">
    <property type="entry name" value="TRYPSIN_HIS"/>
</dbReference>
<dbReference type="InterPro" id="IPR033116">
    <property type="entry name" value="TRYPSIN_SER"/>
</dbReference>
<dbReference type="PANTHER" id="PTHR24252">
    <property type="entry name" value="ACROSIN-RELATED"/>
    <property type="match status" value="1"/>
</dbReference>
<dbReference type="PANTHER" id="PTHR24252:SF12">
    <property type="entry name" value="TRANSMEMBRANE SERINE PROTEASE 7"/>
    <property type="match status" value="1"/>
</dbReference>
<dbReference type="Pfam" id="PF00431">
    <property type="entry name" value="CUB"/>
    <property type="match status" value="2"/>
</dbReference>
<dbReference type="Pfam" id="PF00057">
    <property type="entry name" value="Ldl_recept_a"/>
    <property type="match status" value="2"/>
</dbReference>
<dbReference type="Pfam" id="PF01390">
    <property type="entry name" value="SEA"/>
    <property type="match status" value="1"/>
</dbReference>
<dbReference type="Pfam" id="PF00089">
    <property type="entry name" value="Trypsin"/>
    <property type="match status" value="1"/>
</dbReference>
<dbReference type="PRINTS" id="PR00722">
    <property type="entry name" value="CHYMOTRYPSIN"/>
</dbReference>
<dbReference type="SMART" id="SM00042">
    <property type="entry name" value="CUB"/>
    <property type="match status" value="1"/>
</dbReference>
<dbReference type="SMART" id="SM00192">
    <property type="entry name" value="LDLa"/>
    <property type="match status" value="3"/>
</dbReference>
<dbReference type="SMART" id="SM00020">
    <property type="entry name" value="Tryp_SPc"/>
    <property type="match status" value="1"/>
</dbReference>
<dbReference type="SUPFAM" id="SSF57424">
    <property type="entry name" value="LDL receptor-like module"/>
    <property type="match status" value="3"/>
</dbReference>
<dbReference type="SUPFAM" id="SSF82671">
    <property type="entry name" value="SEA domain"/>
    <property type="match status" value="1"/>
</dbReference>
<dbReference type="SUPFAM" id="SSF49854">
    <property type="entry name" value="Spermadhesin, CUB domain"/>
    <property type="match status" value="2"/>
</dbReference>
<dbReference type="SUPFAM" id="SSF50494">
    <property type="entry name" value="Trypsin-like serine proteases"/>
    <property type="match status" value="1"/>
</dbReference>
<dbReference type="PROSITE" id="PS01180">
    <property type="entry name" value="CUB"/>
    <property type="match status" value="2"/>
</dbReference>
<dbReference type="PROSITE" id="PS01209">
    <property type="entry name" value="LDLRA_1"/>
    <property type="match status" value="1"/>
</dbReference>
<dbReference type="PROSITE" id="PS50068">
    <property type="entry name" value="LDLRA_2"/>
    <property type="match status" value="2"/>
</dbReference>
<dbReference type="PROSITE" id="PS50024">
    <property type="entry name" value="SEA"/>
    <property type="match status" value="1"/>
</dbReference>
<dbReference type="PROSITE" id="PS50240">
    <property type="entry name" value="TRYPSIN_DOM"/>
    <property type="match status" value="1"/>
</dbReference>
<dbReference type="PROSITE" id="PS00134">
    <property type="entry name" value="TRYPSIN_HIS"/>
    <property type="match status" value="1"/>
</dbReference>
<dbReference type="PROSITE" id="PS00135">
    <property type="entry name" value="TRYPSIN_SER"/>
    <property type="match status" value="1"/>
</dbReference>
<feature type="chain" id="PRO_0000027859" description="Transmembrane protease serine 7">
    <location>
        <begin position="1"/>
        <end position="843"/>
    </location>
</feature>
<feature type="topological domain" description="Cytoplasmic" evidence="2">
    <location>
        <begin position="1"/>
        <end position="76"/>
    </location>
</feature>
<feature type="transmembrane region" description="Helical; Signal-anchor for type II membrane protein" evidence="2">
    <location>
        <begin position="77"/>
        <end position="97"/>
    </location>
</feature>
<feature type="topological domain" description="Extracellular" evidence="2">
    <location>
        <begin position="98"/>
        <end position="843"/>
    </location>
</feature>
<feature type="domain" description="SEA" evidence="5">
    <location>
        <begin position="106"/>
        <end position="234"/>
    </location>
</feature>
<feature type="domain" description="CUB 1" evidence="3">
    <location>
        <begin position="247"/>
        <end position="360"/>
    </location>
</feature>
<feature type="domain" description="CUB 2" evidence="3">
    <location>
        <begin position="365"/>
        <end position="481"/>
    </location>
</feature>
<feature type="domain" description="LDL-receptor class A 1" evidence="4">
    <location>
        <begin position="483"/>
        <end position="519"/>
    </location>
</feature>
<feature type="domain" description="LDL-receptor class A 2" evidence="4">
    <location>
        <begin position="517"/>
        <end position="554"/>
    </location>
</feature>
<feature type="domain" description="LDL-receptor class A 3" evidence="4">
    <location>
        <begin position="558"/>
        <end position="595"/>
    </location>
</feature>
<feature type="domain" description="Peptidase S1" evidence="6">
    <location>
        <begin position="606"/>
        <end position="840"/>
    </location>
</feature>
<feature type="region of interest" description="Disordered" evidence="7">
    <location>
        <begin position="27"/>
        <end position="67"/>
    </location>
</feature>
<feature type="compositionally biased region" description="Basic residues" evidence="7">
    <location>
        <begin position="56"/>
        <end position="67"/>
    </location>
</feature>
<feature type="active site" description="Charge relay system" evidence="1">
    <location>
        <position position="646"/>
    </location>
</feature>
<feature type="active site" description="Charge relay system" evidence="1">
    <location>
        <position position="694"/>
    </location>
</feature>
<feature type="active site" description="Charge relay system" evidence="1">
    <location>
        <position position="790"/>
    </location>
</feature>
<feature type="disulfide bond" evidence="1">
    <location>
        <begin position="247"/>
        <end position="273"/>
    </location>
</feature>
<feature type="disulfide bond" evidence="1">
    <location>
        <begin position="299"/>
        <end position="322"/>
    </location>
</feature>
<feature type="disulfide bond" evidence="1">
    <location>
        <begin position="365"/>
        <end position="396"/>
    </location>
</feature>
<feature type="disulfide bond" evidence="1">
    <location>
        <begin position="484"/>
        <end position="496"/>
    </location>
</feature>
<feature type="disulfide bond" evidence="1">
    <location>
        <begin position="491"/>
        <end position="509"/>
    </location>
</feature>
<feature type="disulfide bond" evidence="1">
    <location>
        <begin position="503"/>
        <end position="518"/>
    </location>
</feature>
<feature type="disulfide bond" evidence="1">
    <location>
        <begin position="525"/>
        <end position="544"/>
    </location>
</feature>
<feature type="disulfide bond" evidence="1">
    <location>
        <begin position="538"/>
        <end position="553"/>
    </location>
</feature>
<feature type="disulfide bond" evidence="1">
    <location>
        <begin position="559"/>
        <end position="571"/>
    </location>
</feature>
<feature type="disulfide bond" evidence="1">
    <location>
        <begin position="566"/>
        <end position="585"/>
    </location>
</feature>
<feature type="disulfide bond" evidence="1">
    <location>
        <begin position="579"/>
        <end position="594"/>
    </location>
</feature>
<feature type="disulfide bond" evidence="1">
    <location>
        <begin position="631"/>
        <end position="647"/>
    </location>
</feature>
<feature type="disulfide bond" evidence="1">
    <location>
        <begin position="730"/>
        <end position="796"/>
    </location>
</feature>
<feature type="disulfide bond" evidence="1">
    <location>
        <begin position="762"/>
        <end position="775"/>
    </location>
</feature>
<feature type="splice variant" id="VSP_040771" description="In isoform 3." evidence="9">
    <location>
        <begin position="1"/>
        <end position="271"/>
    </location>
</feature>
<feature type="splice variant" id="VSP_040772" description="In isoform 2." evidence="10">
    <location>
        <begin position="1"/>
        <end position="112"/>
    </location>
</feature>
<feature type="splice variant" id="VSP_040773" description="In isoform 2." evidence="10">
    <location>
        <position position="166"/>
    </location>
</feature>
<feature type="splice variant" id="VSP_040774" description="In isoform 2." evidence="10">
    <location>
        <begin position="231"/>
        <end position="243"/>
    </location>
</feature>
<feature type="sequence conflict" description="In Ref. 2; BAD18401 and 3; AAI17323." evidence="11" ref="2 3">
    <original>S</original>
    <variation>C</variation>
    <location>
        <position position="816"/>
    </location>
</feature>
<proteinExistence type="evidence at protein level"/>
<gene>
    <name type="primary">TMPRSS7</name>
</gene>
<reference key="1">
    <citation type="journal article" date="2006" name="Nature">
        <title>The DNA sequence, annotation and analysis of human chromosome 3.</title>
        <authorList>
            <person name="Muzny D.M."/>
            <person name="Scherer S.E."/>
            <person name="Kaul R."/>
            <person name="Wang J."/>
            <person name="Yu J."/>
            <person name="Sudbrak R."/>
            <person name="Buhay C.J."/>
            <person name="Chen R."/>
            <person name="Cree A."/>
            <person name="Ding Y."/>
            <person name="Dugan-Rocha S."/>
            <person name="Gill R."/>
            <person name="Gunaratne P."/>
            <person name="Harris R.A."/>
            <person name="Hawes A.C."/>
            <person name="Hernandez J."/>
            <person name="Hodgson A.V."/>
            <person name="Hume J."/>
            <person name="Jackson A."/>
            <person name="Khan Z.M."/>
            <person name="Kovar-Smith C."/>
            <person name="Lewis L.R."/>
            <person name="Lozado R.J."/>
            <person name="Metzker M.L."/>
            <person name="Milosavljevic A."/>
            <person name="Miner G.R."/>
            <person name="Morgan M.B."/>
            <person name="Nazareth L.V."/>
            <person name="Scott G."/>
            <person name="Sodergren E."/>
            <person name="Song X.-Z."/>
            <person name="Steffen D."/>
            <person name="Wei S."/>
            <person name="Wheeler D.A."/>
            <person name="Wright M.W."/>
            <person name="Worley K.C."/>
            <person name="Yuan Y."/>
            <person name="Zhang Z."/>
            <person name="Adams C.Q."/>
            <person name="Ansari-Lari M.A."/>
            <person name="Ayele M."/>
            <person name="Brown M.J."/>
            <person name="Chen G."/>
            <person name="Chen Z."/>
            <person name="Clendenning J."/>
            <person name="Clerc-Blankenburg K.P."/>
            <person name="Chen R."/>
            <person name="Chen Z."/>
            <person name="Davis C."/>
            <person name="Delgado O."/>
            <person name="Dinh H.H."/>
            <person name="Dong W."/>
            <person name="Draper H."/>
            <person name="Ernst S."/>
            <person name="Fu G."/>
            <person name="Gonzalez-Garay M.L."/>
            <person name="Garcia D.K."/>
            <person name="Gillett W."/>
            <person name="Gu J."/>
            <person name="Hao B."/>
            <person name="Haugen E."/>
            <person name="Havlak P."/>
            <person name="He X."/>
            <person name="Hennig S."/>
            <person name="Hu S."/>
            <person name="Huang W."/>
            <person name="Jackson L.R."/>
            <person name="Jacob L.S."/>
            <person name="Kelly S.H."/>
            <person name="Kube M."/>
            <person name="Levy R."/>
            <person name="Li Z."/>
            <person name="Liu B."/>
            <person name="Liu J."/>
            <person name="Liu W."/>
            <person name="Lu J."/>
            <person name="Maheshwari M."/>
            <person name="Nguyen B.-V."/>
            <person name="Okwuonu G.O."/>
            <person name="Palmeiri A."/>
            <person name="Pasternak S."/>
            <person name="Perez L.M."/>
            <person name="Phelps K.A."/>
            <person name="Plopper F.J."/>
            <person name="Qiang B."/>
            <person name="Raymond C."/>
            <person name="Rodriguez R."/>
            <person name="Saenphimmachak C."/>
            <person name="Santibanez J."/>
            <person name="Shen H."/>
            <person name="Shen Y."/>
            <person name="Subramanian S."/>
            <person name="Tabor P.E."/>
            <person name="Verduzco D."/>
            <person name="Waldron L."/>
            <person name="Wang J."/>
            <person name="Wang J."/>
            <person name="Wang Q."/>
            <person name="Williams G.A."/>
            <person name="Wong G.K.-S."/>
            <person name="Yao Z."/>
            <person name="Zhang J."/>
            <person name="Zhang X."/>
            <person name="Zhao G."/>
            <person name="Zhou J."/>
            <person name="Zhou Y."/>
            <person name="Nelson D."/>
            <person name="Lehrach H."/>
            <person name="Reinhardt R."/>
            <person name="Naylor S.L."/>
            <person name="Yang H."/>
            <person name="Olson M."/>
            <person name="Weinstock G."/>
            <person name="Gibbs R.A."/>
        </authorList>
    </citation>
    <scope>NUCLEOTIDE SEQUENCE [LARGE SCALE GENOMIC DNA]</scope>
    <source>
        <tissue>Teratocarcinoma</tissue>
    </source>
</reference>
<reference key="2">
    <citation type="journal article" date="2004" name="Nat. Genet.">
        <title>Complete sequencing and characterization of 21,243 full-length human cDNAs.</title>
        <authorList>
            <person name="Ota T."/>
            <person name="Suzuki Y."/>
            <person name="Nishikawa T."/>
            <person name="Otsuki T."/>
            <person name="Sugiyama T."/>
            <person name="Irie R."/>
            <person name="Wakamatsu A."/>
            <person name="Hayashi K."/>
            <person name="Sato H."/>
            <person name="Nagai K."/>
            <person name="Kimura K."/>
            <person name="Makita H."/>
            <person name="Sekine M."/>
            <person name="Obayashi M."/>
            <person name="Nishi T."/>
            <person name="Shibahara T."/>
            <person name="Tanaka T."/>
            <person name="Ishii S."/>
            <person name="Yamamoto J."/>
            <person name="Saito K."/>
            <person name="Kawai Y."/>
            <person name="Isono Y."/>
            <person name="Nakamura Y."/>
            <person name="Nagahari K."/>
            <person name="Murakami K."/>
            <person name="Yasuda T."/>
            <person name="Iwayanagi T."/>
            <person name="Wagatsuma M."/>
            <person name="Shiratori A."/>
            <person name="Sudo H."/>
            <person name="Hosoiri T."/>
            <person name="Kaku Y."/>
            <person name="Kodaira H."/>
            <person name="Kondo H."/>
            <person name="Sugawara M."/>
            <person name="Takahashi M."/>
            <person name="Kanda K."/>
            <person name="Yokoi T."/>
            <person name="Furuya T."/>
            <person name="Kikkawa E."/>
            <person name="Omura Y."/>
            <person name="Abe K."/>
            <person name="Kamihara K."/>
            <person name="Katsuta N."/>
            <person name="Sato K."/>
            <person name="Tanikawa M."/>
            <person name="Yamazaki M."/>
            <person name="Ninomiya K."/>
            <person name="Ishibashi T."/>
            <person name="Yamashita H."/>
            <person name="Murakawa K."/>
            <person name="Fujimori K."/>
            <person name="Tanai H."/>
            <person name="Kimata M."/>
            <person name="Watanabe M."/>
            <person name="Hiraoka S."/>
            <person name="Chiba Y."/>
            <person name="Ishida S."/>
            <person name="Ono Y."/>
            <person name="Takiguchi S."/>
            <person name="Watanabe S."/>
            <person name="Yosida M."/>
            <person name="Hotuta T."/>
            <person name="Kusano J."/>
            <person name="Kanehori K."/>
            <person name="Takahashi-Fujii A."/>
            <person name="Hara H."/>
            <person name="Tanase T.-O."/>
            <person name="Nomura Y."/>
            <person name="Togiya S."/>
            <person name="Komai F."/>
            <person name="Hara R."/>
            <person name="Takeuchi K."/>
            <person name="Arita M."/>
            <person name="Imose N."/>
            <person name="Musashino K."/>
            <person name="Yuuki H."/>
            <person name="Oshima A."/>
            <person name="Sasaki N."/>
            <person name="Aotsuka S."/>
            <person name="Yoshikawa Y."/>
            <person name="Matsunawa H."/>
            <person name="Ichihara T."/>
            <person name="Shiohata N."/>
            <person name="Sano S."/>
            <person name="Moriya S."/>
            <person name="Momiyama H."/>
            <person name="Satoh N."/>
            <person name="Takami S."/>
            <person name="Terashima Y."/>
            <person name="Suzuki O."/>
            <person name="Nakagawa S."/>
            <person name="Senoh A."/>
            <person name="Mizoguchi H."/>
            <person name="Goto Y."/>
            <person name="Shimizu F."/>
            <person name="Wakebe H."/>
            <person name="Hishigaki H."/>
            <person name="Watanabe T."/>
            <person name="Sugiyama A."/>
            <person name="Takemoto M."/>
            <person name="Kawakami B."/>
            <person name="Yamazaki M."/>
            <person name="Watanabe K."/>
            <person name="Kumagai A."/>
            <person name="Itakura S."/>
            <person name="Fukuzumi Y."/>
            <person name="Fujimori Y."/>
            <person name="Komiyama M."/>
            <person name="Tashiro H."/>
            <person name="Tanigami A."/>
            <person name="Fujiwara T."/>
            <person name="Ono T."/>
            <person name="Yamada K."/>
            <person name="Fujii Y."/>
            <person name="Ozaki K."/>
            <person name="Hirao M."/>
            <person name="Ohmori Y."/>
            <person name="Kawabata A."/>
            <person name="Hikiji T."/>
            <person name="Kobatake N."/>
            <person name="Inagaki H."/>
            <person name="Ikema Y."/>
            <person name="Okamoto S."/>
            <person name="Okitani R."/>
            <person name="Kawakami T."/>
            <person name="Noguchi S."/>
            <person name="Itoh T."/>
            <person name="Shigeta K."/>
            <person name="Senba T."/>
            <person name="Matsumura K."/>
            <person name="Nakajima Y."/>
            <person name="Mizuno T."/>
            <person name="Morinaga M."/>
            <person name="Sasaki M."/>
            <person name="Togashi T."/>
            <person name="Oyama M."/>
            <person name="Hata H."/>
            <person name="Watanabe M."/>
            <person name="Komatsu T."/>
            <person name="Mizushima-Sugano J."/>
            <person name="Satoh T."/>
            <person name="Shirai Y."/>
            <person name="Takahashi Y."/>
            <person name="Nakagawa K."/>
            <person name="Okumura K."/>
            <person name="Nagase T."/>
            <person name="Nomura N."/>
            <person name="Kikuchi H."/>
            <person name="Masuho Y."/>
            <person name="Yamashita R."/>
            <person name="Nakai K."/>
            <person name="Yada T."/>
            <person name="Nakamura Y."/>
            <person name="Ohara O."/>
            <person name="Isogai T."/>
            <person name="Sugano S."/>
        </authorList>
    </citation>
    <scope>NUCLEOTIDE SEQUENCE [LARGE SCALE MRNA] (ISOFORM 3)</scope>
</reference>
<reference key="3">
    <citation type="journal article" date="2004" name="Genome Res.">
        <title>The status, quality, and expansion of the NIH full-length cDNA project: the Mammalian Gene Collection (MGC).</title>
        <authorList>
            <consortium name="The MGC Project Team"/>
        </authorList>
    </citation>
    <scope>NUCLEOTIDE SEQUENCE [LARGE SCALE MRNA] (ISOFORM 2)</scope>
</reference>
<reference key="4">
    <citation type="journal article" date="2003" name="Nat. Rev. Genet.">
        <title>Human and mouse proteases: a comparative genomic approach.</title>
        <authorList>
            <person name="Puente X.S."/>
            <person name="Sanchez L.M."/>
            <person name="Overall C.M."/>
            <person name="Lopez-Otin C."/>
        </authorList>
    </citation>
    <scope>IDENTIFICATION</scope>
</reference>
<reference key="5">
    <citation type="journal article" date="2005" name="Biochem. J.">
        <title>Matriptase-3 is a novel phylogenetically preserved membrane-anchored serine protease with broad serpin reactivity.</title>
        <authorList>
            <person name="Szabo R."/>
            <person name="Netzel-Arnett S."/>
            <person name="Hobson J.P."/>
            <person name="Antalis T.M."/>
            <person name="Bugge T.H."/>
        </authorList>
    </citation>
    <scope>TISSUE SPECIFICITY</scope>
    <scope>HETERODIMER WITH SERPINA5</scope>
</reference>
<protein>
    <recommendedName>
        <fullName>Transmembrane protease serine 7</fullName>
        <ecNumber>3.4.21.-</ecNumber>
    </recommendedName>
    <alternativeName>
        <fullName>Matriptase-3</fullName>
    </alternativeName>
</protein>